<evidence type="ECO:0000255" key="1">
    <source>
        <dbReference type="HAMAP-Rule" id="MF_01356"/>
    </source>
</evidence>
<evidence type="ECO:0000256" key="2">
    <source>
        <dbReference type="SAM" id="MobiDB-lite"/>
    </source>
</evidence>
<keyword id="KW-0004">4Fe-4S</keyword>
<keyword id="KW-0997">Cell inner membrane</keyword>
<keyword id="KW-1003">Cell membrane</keyword>
<keyword id="KW-0408">Iron</keyword>
<keyword id="KW-0411">Iron-sulfur</keyword>
<keyword id="KW-0472">Membrane</keyword>
<keyword id="KW-0479">Metal-binding</keyword>
<keyword id="KW-0520">NAD</keyword>
<keyword id="KW-0874">Quinone</keyword>
<keyword id="KW-1185">Reference proteome</keyword>
<keyword id="KW-1278">Translocase</keyword>
<keyword id="KW-0813">Transport</keyword>
<keyword id="KW-0830">Ubiquinone</keyword>
<protein>
    <recommendedName>
        <fullName evidence="1">NADH-quinone oxidoreductase subunit B 1</fullName>
        <ecNumber evidence="1">7.1.1.-</ecNumber>
    </recommendedName>
    <alternativeName>
        <fullName evidence="1">NADH dehydrogenase I subunit B 1</fullName>
    </alternativeName>
    <alternativeName>
        <fullName evidence="1">NDH-1 subunit B 1</fullName>
    </alternativeName>
</protein>
<proteinExistence type="inferred from homology"/>
<accession>Q3JC16</accession>
<comment type="function">
    <text evidence="1">NDH-1 shuttles electrons from NADH, via FMN and iron-sulfur (Fe-S) centers, to quinones in the respiratory chain. The immediate electron acceptor for the enzyme in this species is believed to be ubiquinone. Couples the redox reaction to proton translocation (for every two electrons transferred, four hydrogen ions are translocated across the cytoplasmic membrane), and thus conserves the redox energy in a proton gradient.</text>
</comment>
<comment type="catalytic activity">
    <reaction evidence="1">
        <text>a quinone + NADH + 5 H(+)(in) = a quinol + NAD(+) + 4 H(+)(out)</text>
        <dbReference type="Rhea" id="RHEA:57888"/>
        <dbReference type="ChEBI" id="CHEBI:15378"/>
        <dbReference type="ChEBI" id="CHEBI:24646"/>
        <dbReference type="ChEBI" id="CHEBI:57540"/>
        <dbReference type="ChEBI" id="CHEBI:57945"/>
        <dbReference type="ChEBI" id="CHEBI:132124"/>
    </reaction>
</comment>
<comment type="cofactor">
    <cofactor evidence="1">
        <name>[4Fe-4S] cluster</name>
        <dbReference type="ChEBI" id="CHEBI:49883"/>
    </cofactor>
    <text evidence="1">Binds 1 [4Fe-4S] cluster.</text>
</comment>
<comment type="subunit">
    <text evidence="1">NDH-1 is composed of 14 different subunits. Subunits NuoB, C, D, E, F, and G constitute the peripheral sector of the complex.</text>
</comment>
<comment type="subcellular location">
    <subcellularLocation>
        <location evidence="1">Cell inner membrane</location>
        <topology evidence="1">Peripheral membrane protein</topology>
        <orientation evidence="1">Cytoplasmic side</orientation>
    </subcellularLocation>
</comment>
<comment type="similarity">
    <text evidence="1">Belongs to the complex I 20 kDa subunit family.</text>
</comment>
<name>NUOB1_NITOC</name>
<organism>
    <name type="scientific">Nitrosococcus oceani (strain ATCC 19707 / BCRC 17464 / JCM 30415 / NCIMB 11848 / C-107)</name>
    <dbReference type="NCBI Taxonomy" id="323261"/>
    <lineage>
        <taxon>Bacteria</taxon>
        <taxon>Pseudomonadati</taxon>
        <taxon>Pseudomonadota</taxon>
        <taxon>Gammaproteobacteria</taxon>
        <taxon>Chromatiales</taxon>
        <taxon>Chromatiaceae</taxon>
        <taxon>Nitrosococcus</taxon>
    </lineage>
</organism>
<reference key="1">
    <citation type="journal article" date="2006" name="Appl. Environ. Microbiol.">
        <title>Complete genome sequence of the marine, chemolithoautotrophic, ammonia-oxidizing bacterium Nitrosococcus oceani ATCC 19707.</title>
        <authorList>
            <person name="Klotz M.G."/>
            <person name="Arp D.J."/>
            <person name="Chain P.S.G."/>
            <person name="El-Sheikh A.F."/>
            <person name="Hauser L.J."/>
            <person name="Hommes N.G."/>
            <person name="Larimer F.W."/>
            <person name="Malfatti S.A."/>
            <person name="Norton J.M."/>
            <person name="Poret-Peterson A.T."/>
            <person name="Vergez L.M."/>
            <person name="Ward B.B."/>
        </authorList>
    </citation>
    <scope>NUCLEOTIDE SEQUENCE [LARGE SCALE GENOMIC DNA]</scope>
    <source>
        <strain>ATCC 19707 / BCRC 17464 / JCM 30415 / NCIMB 11848 / C-107</strain>
    </source>
</reference>
<gene>
    <name evidence="1" type="primary">nuoB1</name>
    <name type="ordered locus">Noc_1126</name>
</gene>
<feature type="chain" id="PRO_0000376290" description="NADH-quinone oxidoreductase subunit B 1">
    <location>
        <begin position="1"/>
        <end position="212"/>
    </location>
</feature>
<feature type="region of interest" description="Disordered" evidence="2">
    <location>
        <begin position="179"/>
        <end position="212"/>
    </location>
</feature>
<feature type="compositionally biased region" description="Basic and acidic residues" evidence="2">
    <location>
        <begin position="186"/>
        <end position="212"/>
    </location>
</feature>
<feature type="binding site" evidence="1">
    <location>
        <position position="55"/>
    </location>
    <ligand>
        <name>[4Fe-4S] cluster</name>
        <dbReference type="ChEBI" id="CHEBI:49883"/>
    </ligand>
</feature>
<feature type="binding site" evidence="1">
    <location>
        <position position="56"/>
    </location>
    <ligand>
        <name>[4Fe-4S] cluster</name>
        <dbReference type="ChEBI" id="CHEBI:49883"/>
    </ligand>
</feature>
<feature type="binding site" evidence="1">
    <location>
        <position position="121"/>
    </location>
    <ligand>
        <name>[4Fe-4S] cluster</name>
        <dbReference type="ChEBI" id="CHEBI:49883"/>
    </ligand>
</feature>
<feature type="binding site" evidence="1">
    <location>
        <position position="150"/>
    </location>
    <ligand>
        <name>[4Fe-4S] cluster</name>
        <dbReference type="ChEBI" id="CHEBI:49883"/>
    </ligand>
</feature>
<sequence length="212" mass="23984">MRWRLSKPQAATSIEQSKGSFEDAIRRNLLFAQLQDLVAWGRKNSLWPYNFGLSCCYVEMVTSFTSKYDIARFGAEVIRATPREADLMVISGTVFIKMAPVIKRLYEQMMEPRWVISMGSCANSGGMYDIYSVVQGVDKFLPVDVYVPGCPPRPDAFLEGLLLLQEAIGKEQRPLSWAIGPQGVERAPKPSLRDQRRAERQKATVFRSPDEV</sequence>
<dbReference type="EC" id="7.1.1.-" evidence="1"/>
<dbReference type="EMBL" id="CP000127">
    <property type="protein sequence ID" value="ABA57630.1"/>
    <property type="molecule type" value="Genomic_DNA"/>
</dbReference>
<dbReference type="SMR" id="Q3JC16"/>
<dbReference type="FunCoup" id="Q3JC16">
    <property type="interactions" value="363"/>
</dbReference>
<dbReference type="STRING" id="323261.Noc_1126"/>
<dbReference type="KEGG" id="noc:Noc_1126"/>
<dbReference type="eggNOG" id="COG0377">
    <property type="taxonomic scope" value="Bacteria"/>
</dbReference>
<dbReference type="HOGENOM" id="CLU_055737_7_3_6"/>
<dbReference type="InParanoid" id="Q3JC16"/>
<dbReference type="Proteomes" id="UP000006838">
    <property type="component" value="Chromosome"/>
</dbReference>
<dbReference type="GO" id="GO:0005886">
    <property type="term" value="C:plasma membrane"/>
    <property type="evidence" value="ECO:0007669"/>
    <property type="project" value="UniProtKB-SubCell"/>
</dbReference>
<dbReference type="GO" id="GO:0045271">
    <property type="term" value="C:respiratory chain complex I"/>
    <property type="evidence" value="ECO:0007669"/>
    <property type="project" value="TreeGrafter"/>
</dbReference>
<dbReference type="GO" id="GO:0051539">
    <property type="term" value="F:4 iron, 4 sulfur cluster binding"/>
    <property type="evidence" value="ECO:0007669"/>
    <property type="project" value="UniProtKB-KW"/>
</dbReference>
<dbReference type="GO" id="GO:0005506">
    <property type="term" value="F:iron ion binding"/>
    <property type="evidence" value="ECO:0007669"/>
    <property type="project" value="UniProtKB-UniRule"/>
</dbReference>
<dbReference type="GO" id="GO:0008137">
    <property type="term" value="F:NADH dehydrogenase (ubiquinone) activity"/>
    <property type="evidence" value="ECO:0007669"/>
    <property type="project" value="InterPro"/>
</dbReference>
<dbReference type="GO" id="GO:0050136">
    <property type="term" value="F:NADH:ubiquinone reductase (non-electrogenic) activity"/>
    <property type="evidence" value="ECO:0007669"/>
    <property type="project" value="UniProtKB-UniRule"/>
</dbReference>
<dbReference type="GO" id="GO:0048038">
    <property type="term" value="F:quinone binding"/>
    <property type="evidence" value="ECO:0007669"/>
    <property type="project" value="UniProtKB-KW"/>
</dbReference>
<dbReference type="GO" id="GO:0009060">
    <property type="term" value="P:aerobic respiration"/>
    <property type="evidence" value="ECO:0007669"/>
    <property type="project" value="TreeGrafter"/>
</dbReference>
<dbReference type="GO" id="GO:0015990">
    <property type="term" value="P:electron transport coupled proton transport"/>
    <property type="evidence" value="ECO:0007669"/>
    <property type="project" value="TreeGrafter"/>
</dbReference>
<dbReference type="FunFam" id="3.40.50.12280:FF:000002">
    <property type="entry name" value="NADH-quinone oxidoreductase subunit B"/>
    <property type="match status" value="1"/>
</dbReference>
<dbReference type="Gene3D" id="3.40.50.12280">
    <property type="match status" value="1"/>
</dbReference>
<dbReference type="HAMAP" id="MF_01356">
    <property type="entry name" value="NDH1_NuoB"/>
    <property type="match status" value="1"/>
</dbReference>
<dbReference type="InterPro" id="IPR006137">
    <property type="entry name" value="NADH_UbQ_OxRdtase-like_20kDa"/>
</dbReference>
<dbReference type="InterPro" id="IPR006138">
    <property type="entry name" value="NADH_UQ_OxRdtase_20Kd_su"/>
</dbReference>
<dbReference type="NCBIfam" id="TIGR01957">
    <property type="entry name" value="nuoB_fam"/>
    <property type="match status" value="1"/>
</dbReference>
<dbReference type="NCBIfam" id="NF005012">
    <property type="entry name" value="PRK06411.1"/>
    <property type="match status" value="1"/>
</dbReference>
<dbReference type="PANTHER" id="PTHR11995">
    <property type="entry name" value="NADH DEHYDROGENASE"/>
    <property type="match status" value="1"/>
</dbReference>
<dbReference type="PANTHER" id="PTHR11995:SF14">
    <property type="entry name" value="NADH DEHYDROGENASE [UBIQUINONE] IRON-SULFUR PROTEIN 7, MITOCHONDRIAL"/>
    <property type="match status" value="1"/>
</dbReference>
<dbReference type="Pfam" id="PF01058">
    <property type="entry name" value="Oxidored_q6"/>
    <property type="match status" value="1"/>
</dbReference>
<dbReference type="SUPFAM" id="SSF56770">
    <property type="entry name" value="HydA/Nqo6-like"/>
    <property type="match status" value="1"/>
</dbReference>
<dbReference type="PROSITE" id="PS01150">
    <property type="entry name" value="COMPLEX1_20K"/>
    <property type="match status" value="1"/>
</dbReference>